<feature type="chain" id="PRO_1000136501" description="Putative pyruvate, phosphate dikinase regulatory protein">
    <location>
        <begin position="1"/>
        <end position="270"/>
    </location>
</feature>
<feature type="binding site" evidence="1">
    <location>
        <begin position="149"/>
        <end position="156"/>
    </location>
    <ligand>
        <name>ADP</name>
        <dbReference type="ChEBI" id="CHEBI:456216"/>
    </ligand>
</feature>
<evidence type="ECO:0000255" key="1">
    <source>
        <dbReference type="HAMAP-Rule" id="MF_00921"/>
    </source>
</evidence>
<gene>
    <name type="ordered locus">Teth39_1359</name>
</gene>
<name>PDRP_THEP3</name>
<sequence>MEEGVSIYLVSDSNVDTAENIASIAAAHFDTFIEKIKKYPYVGDKNQIEEIIMEAANDANSIIIHTMVVPELKDYLLKKAQKFGIKIVDVMGPVINAIEDSTGISPHTNLAKNNKEDYLKKIEVIEFAVKYDDGKDAMGILLADVVVIGVSRTSKTPLCMYLAHKYIKAANLPLVPEIEPPQELFEINPKKIFGLTIDPEVLVKIRKERLKSLGLDANAIYATEERVKKEIKYAEEVMKRLGCTVIDVTNKAVEETANVILNVLKGGEIS</sequence>
<keyword id="KW-0418">Kinase</keyword>
<keyword id="KW-0547">Nucleotide-binding</keyword>
<keyword id="KW-1185">Reference proteome</keyword>
<keyword id="KW-0723">Serine/threonine-protein kinase</keyword>
<keyword id="KW-0808">Transferase</keyword>
<comment type="function">
    <text evidence="1">Bifunctional serine/threonine kinase and phosphorylase involved in the regulation of the pyruvate, phosphate dikinase (PPDK) by catalyzing its phosphorylation/dephosphorylation.</text>
</comment>
<comment type="catalytic activity">
    <reaction evidence="1">
        <text>N(tele)-phospho-L-histidyl/L-threonyl-[pyruvate, phosphate dikinase] + ADP = N(tele)-phospho-L-histidyl/O-phospho-L-threonyl-[pyruvate, phosphate dikinase] + AMP + H(+)</text>
        <dbReference type="Rhea" id="RHEA:43692"/>
        <dbReference type="Rhea" id="RHEA-COMP:10650"/>
        <dbReference type="Rhea" id="RHEA-COMP:10651"/>
        <dbReference type="ChEBI" id="CHEBI:15378"/>
        <dbReference type="ChEBI" id="CHEBI:30013"/>
        <dbReference type="ChEBI" id="CHEBI:61977"/>
        <dbReference type="ChEBI" id="CHEBI:83586"/>
        <dbReference type="ChEBI" id="CHEBI:456215"/>
        <dbReference type="ChEBI" id="CHEBI:456216"/>
        <dbReference type="EC" id="2.7.11.32"/>
    </reaction>
</comment>
<comment type="catalytic activity">
    <reaction evidence="1">
        <text>N(tele)-phospho-L-histidyl/O-phospho-L-threonyl-[pyruvate, phosphate dikinase] + phosphate + H(+) = N(tele)-phospho-L-histidyl/L-threonyl-[pyruvate, phosphate dikinase] + diphosphate</text>
        <dbReference type="Rhea" id="RHEA:43696"/>
        <dbReference type="Rhea" id="RHEA-COMP:10650"/>
        <dbReference type="Rhea" id="RHEA-COMP:10651"/>
        <dbReference type="ChEBI" id="CHEBI:15378"/>
        <dbReference type="ChEBI" id="CHEBI:30013"/>
        <dbReference type="ChEBI" id="CHEBI:33019"/>
        <dbReference type="ChEBI" id="CHEBI:43474"/>
        <dbReference type="ChEBI" id="CHEBI:61977"/>
        <dbReference type="ChEBI" id="CHEBI:83586"/>
        <dbReference type="EC" id="2.7.4.27"/>
    </reaction>
</comment>
<comment type="similarity">
    <text evidence="1">Belongs to the pyruvate, phosphate/water dikinase regulatory protein family. PDRP subfamily.</text>
</comment>
<accession>B0KA48</accession>
<reference key="1">
    <citation type="submission" date="2008-01" db="EMBL/GenBank/DDBJ databases">
        <title>Complete sequence of Thermoanaerobacter pseudethanolicus 39E.</title>
        <authorList>
            <person name="Copeland A."/>
            <person name="Lucas S."/>
            <person name="Lapidus A."/>
            <person name="Barry K."/>
            <person name="Glavina del Rio T."/>
            <person name="Dalin E."/>
            <person name="Tice H."/>
            <person name="Pitluck S."/>
            <person name="Bruce D."/>
            <person name="Goodwin L."/>
            <person name="Saunders E."/>
            <person name="Brettin T."/>
            <person name="Detter J.C."/>
            <person name="Han C."/>
            <person name="Schmutz J."/>
            <person name="Larimer F."/>
            <person name="Land M."/>
            <person name="Hauser L."/>
            <person name="Kyrpides N."/>
            <person name="Lykidis A."/>
            <person name="Hemme C."/>
            <person name="Fields M.W."/>
            <person name="He Z."/>
            <person name="Zhou J."/>
            <person name="Richardson P."/>
        </authorList>
    </citation>
    <scope>NUCLEOTIDE SEQUENCE [LARGE SCALE GENOMIC DNA]</scope>
    <source>
        <strain>ATCC 33223 / DSM 2355 / 39E</strain>
    </source>
</reference>
<proteinExistence type="inferred from homology"/>
<protein>
    <recommendedName>
        <fullName evidence="1">Putative pyruvate, phosphate dikinase regulatory protein</fullName>
        <shortName evidence="1">PPDK regulatory protein</shortName>
        <ecNumber evidence="1">2.7.11.32</ecNumber>
        <ecNumber evidence="1">2.7.4.27</ecNumber>
    </recommendedName>
</protein>
<dbReference type="EC" id="2.7.11.32" evidence="1"/>
<dbReference type="EC" id="2.7.4.27" evidence="1"/>
<dbReference type="EMBL" id="CP000924">
    <property type="protein sequence ID" value="ABY95011.1"/>
    <property type="molecule type" value="Genomic_DNA"/>
</dbReference>
<dbReference type="RefSeq" id="WP_003867909.1">
    <property type="nucleotide sequence ID" value="NC_010321.1"/>
</dbReference>
<dbReference type="SMR" id="B0KA48"/>
<dbReference type="STRING" id="340099.Teth39_1359"/>
<dbReference type="KEGG" id="tpd:Teth39_1359"/>
<dbReference type="eggNOG" id="COG1806">
    <property type="taxonomic scope" value="Bacteria"/>
</dbReference>
<dbReference type="HOGENOM" id="CLU_046206_2_1_9"/>
<dbReference type="Proteomes" id="UP000002156">
    <property type="component" value="Chromosome"/>
</dbReference>
<dbReference type="GO" id="GO:0043531">
    <property type="term" value="F:ADP binding"/>
    <property type="evidence" value="ECO:0007669"/>
    <property type="project" value="UniProtKB-UniRule"/>
</dbReference>
<dbReference type="GO" id="GO:0005524">
    <property type="term" value="F:ATP binding"/>
    <property type="evidence" value="ECO:0007669"/>
    <property type="project" value="InterPro"/>
</dbReference>
<dbReference type="GO" id="GO:0016776">
    <property type="term" value="F:phosphotransferase activity, phosphate group as acceptor"/>
    <property type="evidence" value="ECO:0007669"/>
    <property type="project" value="UniProtKB-UniRule"/>
</dbReference>
<dbReference type="GO" id="GO:0004674">
    <property type="term" value="F:protein serine/threonine kinase activity"/>
    <property type="evidence" value="ECO:0007669"/>
    <property type="project" value="UniProtKB-UniRule"/>
</dbReference>
<dbReference type="HAMAP" id="MF_00921">
    <property type="entry name" value="PDRP"/>
    <property type="match status" value="1"/>
</dbReference>
<dbReference type="InterPro" id="IPR005177">
    <property type="entry name" value="Kinase-pyrophosphorylase"/>
</dbReference>
<dbReference type="InterPro" id="IPR026565">
    <property type="entry name" value="PPDK_reg"/>
</dbReference>
<dbReference type="NCBIfam" id="NF003742">
    <property type="entry name" value="PRK05339.1"/>
    <property type="match status" value="1"/>
</dbReference>
<dbReference type="PANTHER" id="PTHR31756">
    <property type="entry name" value="PYRUVATE, PHOSPHATE DIKINASE REGULATORY PROTEIN 1, CHLOROPLASTIC"/>
    <property type="match status" value="1"/>
</dbReference>
<dbReference type="PANTHER" id="PTHR31756:SF3">
    <property type="entry name" value="PYRUVATE, PHOSPHATE DIKINASE REGULATORY PROTEIN 1, CHLOROPLASTIC"/>
    <property type="match status" value="1"/>
</dbReference>
<dbReference type="Pfam" id="PF03618">
    <property type="entry name" value="Kinase-PPPase"/>
    <property type="match status" value="1"/>
</dbReference>
<organism>
    <name type="scientific">Thermoanaerobacter pseudethanolicus (strain ATCC 33223 / 39E)</name>
    <name type="common">Clostridium thermohydrosulfuricum</name>
    <dbReference type="NCBI Taxonomy" id="340099"/>
    <lineage>
        <taxon>Bacteria</taxon>
        <taxon>Bacillati</taxon>
        <taxon>Bacillota</taxon>
        <taxon>Clostridia</taxon>
        <taxon>Thermoanaerobacterales</taxon>
        <taxon>Thermoanaerobacteraceae</taxon>
        <taxon>Thermoanaerobacter</taxon>
    </lineage>
</organism>